<accession>Q1CNM8</accession>
<accession>D1Q0V2</accession>
<evidence type="ECO:0000255" key="1">
    <source>
        <dbReference type="HAMAP-Rule" id="MF_00012"/>
    </source>
</evidence>
<comment type="function">
    <text evidence="1">Functions in the biosynthesis of branched-chain amino acids. Catalyzes the dehydration of (2R,3R)-2,3-dihydroxy-3-methylpentanoate (2,3-dihydroxy-3-methylvalerate) into 2-oxo-3-methylpentanoate (2-oxo-3-methylvalerate) and of (2R)-2,3-dihydroxy-3-methylbutanoate (2,3-dihydroxyisovalerate) into 2-oxo-3-methylbutanoate (2-oxoisovalerate), the penultimate precursor to L-isoleucine and L-valine, respectively.</text>
</comment>
<comment type="catalytic activity">
    <reaction evidence="1">
        <text>(2R)-2,3-dihydroxy-3-methylbutanoate = 3-methyl-2-oxobutanoate + H2O</text>
        <dbReference type="Rhea" id="RHEA:24809"/>
        <dbReference type="ChEBI" id="CHEBI:11851"/>
        <dbReference type="ChEBI" id="CHEBI:15377"/>
        <dbReference type="ChEBI" id="CHEBI:49072"/>
        <dbReference type="EC" id="4.2.1.9"/>
    </reaction>
    <physiologicalReaction direction="left-to-right" evidence="1">
        <dbReference type="Rhea" id="RHEA:24810"/>
    </physiologicalReaction>
</comment>
<comment type="catalytic activity">
    <reaction evidence="1">
        <text>(2R,3R)-2,3-dihydroxy-3-methylpentanoate = (S)-3-methyl-2-oxopentanoate + H2O</text>
        <dbReference type="Rhea" id="RHEA:27694"/>
        <dbReference type="ChEBI" id="CHEBI:15377"/>
        <dbReference type="ChEBI" id="CHEBI:35146"/>
        <dbReference type="ChEBI" id="CHEBI:49258"/>
        <dbReference type="EC" id="4.2.1.9"/>
    </reaction>
    <physiologicalReaction direction="left-to-right" evidence="1">
        <dbReference type="Rhea" id="RHEA:27695"/>
    </physiologicalReaction>
</comment>
<comment type="cofactor">
    <cofactor evidence="1">
        <name>[2Fe-2S] cluster</name>
        <dbReference type="ChEBI" id="CHEBI:190135"/>
    </cofactor>
    <text evidence="1">Binds 1 [2Fe-2S] cluster per subunit. This cluster acts as a Lewis acid cofactor.</text>
</comment>
<comment type="cofactor">
    <cofactor evidence="1">
        <name>Mg(2+)</name>
        <dbReference type="ChEBI" id="CHEBI:18420"/>
    </cofactor>
</comment>
<comment type="pathway">
    <text evidence="1">Amino-acid biosynthesis; L-isoleucine biosynthesis; L-isoleucine from 2-oxobutanoate: step 3/4.</text>
</comment>
<comment type="pathway">
    <text evidence="1">Amino-acid biosynthesis; L-valine biosynthesis; L-valine from pyruvate: step 3/4.</text>
</comment>
<comment type="subunit">
    <text evidence="1">Homodimer.</text>
</comment>
<comment type="similarity">
    <text evidence="1">Belongs to the IlvD/Edd family.</text>
</comment>
<sequence length="616" mass="65499">MPKYRSHTTTHGRNMAGARALWRATGMTDDDFGKPIIAVVNSFTQFVPGHVHLRDLGKLVAEQIVASGGVAKEFNTIAVDDGIAMGHGGMLYSLPSRELIADSVEYMVNAHCADAMVCISNCDKITPGMLMASLRLNIPVIFVSGGPMEAGKTKLSDKIIKLDLIDAMIQGANPNVSDEESAQIERSACPTCGSCSGMFTANSMNCLNEALGLALPGNGSLLATHADRKQLFLDAGKHIVALTKRYYEQDDVSALPRNIANKAAFENAMILDIAMGGSTNTVLHLLAAAQEGEIDFSMTDIDHLSRKVPHLCKVAPSTQKYHMEDVHRAGGVIGILGELDRAGLLNRDVSNVLGLNLTQTLEAYDVMLTQDEGVKQMYAAGPAGIRTTKAFSQDCRYPSLDTDREEGCIRTREHAYSQDGGLAVLYGNIAADGCIVKTAGVDKDSLTFRGPAKVFESQDEAVEAILGGKVVAGDVVVIRYEGPKGGPGMQEMLYPTTYLKSMGLGKSCALLTDGRFSGGTSGLSIGHVSPEAASGGLIGLVQDGDFINIDIPNRGIVLDVSEAELAARRETEEAHGDAAWSPKGRERQVSYALRAYAMLATSADKGAVRDKSKLGG</sequence>
<keyword id="KW-0001">2Fe-2S</keyword>
<keyword id="KW-0028">Amino-acid biosynthesis</keyword>
<keyword id="KW-0100">Branched-chain amino acid biosynthesis</keyword>
<keyword id="KW-0408">Iron</keyword>
<keyword id="KW-0411">Iron-sulfur</keyword>
<keyword id="KW-0456">Lyase</keyword>
<keyword id="KW-0460">Magnesium</keyword>
<keyword id="KW-0479">Metal-binding</keyword>
<name>ILVD_YERPN</name>
<feature type="chain" id="PRO_1000001085" description="Dihydroxy-acid dehydratase">
    <location>
        <begin position="1"/>
        <end position="616"/>
    </location>
</feature>
<feature type="active site" description="Proton acceptor" evidence="1">
    <location>
        <position position="517"/>
    </location>
</feature>
<feature type="binding site" evidence="1">
    <location>
        <position position="81"/>
    </location>
    <ligand>
        <name>Mg(2+)</name>
        <dbReference type="ChEBI" id="CHEBI:18420"/>
    </ligand>
</feature>
<feature type="binding site" evidence="1">
    <location>
        <position position="122"/>
    </location>
    <ligand>
        <name>[2Fe-2S] cluster</name>
        <dbReference type="ChEBI" id="CHEBI:190135"/>
    </ligand>
</feature>
<feature type="binding site" evidence="1">
    <location>
        <position position="123"/>
    </location>
    <ligand>
        <name>Mg(2+)</name>
        <dbReference type="ChEBI" id="CHEBI:18420"/>
    </ligand>
</feature>
<feature type="binding site" description="via carbamate group" evidence="1">
    <location>
        <position position="124"/>
    </location>
    <ligand>
        <name>Mg(2+)</name>
        <dbReference type="ChEBI" id="CHEBI:18420"/>
    </ligand>
</feature>
<feature type="binding site" evidence="1">
    <location>
        <position position="195"/>
    </location>
    <ligand>
        <name>[2Fe-2S] cluster</name>
        <dbReference type="ChEBI" id="CHEBI:190135"/>
    </ligand>
</feature>
<feature type="binding site" evidence="1">
    <location>
        <position position="491"/>
    </location>
    <ligand>
        <name>Mg(2+)</name>
        <dbReference type="ChEBI" id="CHEBI:18420"/>
    </ligand>
</feature>
<feature type="modified residue" description="N6-carboxylysine" evidence="1">
    <location>
        <position position="124"/>
    </location>
</feature>
<proteinExistence type="inferred from homology"/>
<organism>
    <name type="scientific">Yersinia pestis bv. Antiqua (strain Nepal516)</name>
    <dbReference type="NCBI Taxonomy" id="377628"/>
    <lineage>
        <taxon>Bacteria</taxon>
        <taxon>Pseudomonadati</taxon>
        <taxon>Pseudomonadota</taxon>
        <taxon>Gammaproteobacteria</taxon>
        <taxon>Enterobacterales</taxon>
        <taxon>Yersiniaceae</taxon>
        <taxon>Yersinia</taxon>
    </lineage>
</organism>
<reference key="1">
    <citation type="journal article" date="2006" name="J. Bacteriol.">
        <title>Complete genome sequence of Yersinia pestis strains Antiqua and Nepal516: evidence of gene reduction in an emerging pathogen.</title>
        <authorList>
            <person name="Chain P.S.G."/>
            <person name="Hu P."/>
            <person name="Malfatti S.A."/>
            <person name="Radnedge L."/>
            <person name="Larimer F."/>
            <person name="Vergez L.M."/>
            <person name="Worsham P."/>
            <person name="Chu M.C."/>
            <person name="Andersen G.L."/>
        </authorList>
    </citation>
    <scope>NUCLEOTIDE SEQUENCE [LARGE SCALE GENOMIC DNA]</scope>
    <source>
        <strain>Nepal516</strain>
    </source>
</reference>
<reference key="2">
    <citation type="submission" date="2009-04" db="EMBL/GenBank/DDBJ databases">
        <title>Yersinia pestis Nepal516A whole genome shotgun sequencing project.</title>
        <authorList>
            <person name="Plunkett G. III"/>
            <person name="Anderson B.D."/>
            <person name="Baumler D.J."/>
            <person name="Burland V."/>
            <person name="Cabot E.L."/>
            <person name="Glasner J.D."/>
            <person name="Mau B."/>
            <person name="Neeno-Eckwall E."/>
            <person name="Perna N.T."/>
            <person name="Munk A.C."/>
            <person name="Tapia R."/>
            <person name="Green L.D."/>
            <person name="Rogers Y.C."/>
            <person name="Detter J.C."/>
            <person name="Bruce D.C."/>
            <person name="Brettin T.S."/>
        </authorList>
    </citation>
    <scope>NUCLEOTIDE SEQUENCE [LARGE SCALE GENOMIC DNA]</scope>
    <source>
        <strain>Nepal516</strain>
    </source>
</reference>
<protein>
    <recommendedName>
        <fullName evidence="1">Dihydroxy-acid dehydratase</fullName>
        <shortName evidence="1">DAD</shortName>
        <ecNumber evidence="1">4.2.1.9</ecNumber>
    </recommendedName>
</protein>
<gene>
    <name evidence="1" type="primary">ilvD</name>
    <name type="ordered locus">YPN_0069</name>
    <name type="ORF">YP516_0018</name>
</gene>
<dbReference type="EC" id="4.2.1.9" evidence="1"/>
<dbReference type="EMBL" id="CP000305">
    <property type="protein sequence ID" value="ABG16402.1"/>
    <property type="molecule type" value="Genomic_DNA"/>
</dbReference>
<dbReference type="EMBL" id="ACNQ01000001">
    <property type="protein sequence ID" value="EEO78506.1"/>
    <property type="molecule type" value="Genomic_DNA"/>
</dbReference>
<dbReference type="RefSeq" id="WP_002212014.1">
    <property type="nucleotide sequence ID" value="NZ_ACNQ01000001.1"/>
</dbReference>
<dbReference type="SMR" id="Q1CNM8"/>
<dbReference type="GeneID" id="57974808"/>
<dbReference type="KEGG" id="ypn:YPN_0069"/>
<dbReference type="HOGENOM" id="CLU_014271_4_2_6"/>
<dbReference type="UniPathway" id="UPA00047">
    <property type="reaction ID" value="UER00057"/>
</dbReference>
<dbReference type="UniPathway" id="UPA00049">
    <property type="reaction ID" value="UER00061"/>
</dbReference>
<dbReference type="Proteomes" id="UP000008936">
    <property type="component" value="Chromosome"/>
</dbReference>
<dbReference type="GO" id="GO:0005829">
    <property type="term" value="C:cytosol"/>
    <property type="evidence" value="ECO:0007669"/>
    <property type="project" value="TreeGrafter"/>
</dbReference>
<dbReference type="GO" id="GO:0051537">
    <property type="term" value="F:2 iron, 2 sulfur cluster binding"/>
    <property type="evidence" value="ECO:0007669"/>
    <property type="project" value="UniProtKB-UniRule"/>
</dbReference>
<dbReference type="GO" id="GO:0004160">
    <property type="term" value="F:dihydroxy-acid dehydratase activity"/>
    <property type="evidence" value="ECO:0007669"/>
    <property type="project" value="UniProtKB-UniRule"/>
</dbReference>
<dbReference type="GO" id="GO:0000287">
    <property type="term" value="F:magnesium ion binding"/>
    <property type="evidence" value="ECO:0007669"/>
    <property type="project" value="UniProtKB-UniRule"/>
</dbReference>
<dbReference type="GO" id="GO:0009097">
    <property type="term" value="P:isoleucine biosynthetic process"/>
    <property type="evidence" value="ECO:0007669"/>
    <property type="project" value="UniProtKB-UniRule"/>
</dbReference>
<dbReference type="GO" id="GO:0009099">
    <property type="term" value="P:L-valine biosynthetic process"/>
    <property type="evidence" value="ECO:0007669"/>
    <property type="project" value="UniProtKB-UniRule"/>
</dbReference>
<dbReference type="FunFam" id="3.50.30.80:FF:000001">
    <property type="entry name" value="Dihydroxy-acid dehydratase"/>
    <property type="match status" value="1"/>
</dbReference>
<dbReference type="Gene3D" id="3.50.30.80">
    <property type="entry name" value="IlvD/EDD C-terminal domain-like"/>
    <property type="match status" value="1"/>
</dbReference>
<dbReference type="HAMAP" id="MF_00012">
    <property type="entry name" value="IlvD"/>
    <property type="match status" value="1"/>
</dbReference>
<dbReference type="InterPro" id="IPR042096">
    <property type="entry name" value="Dihydro-acid_dehy_C"/>
</dbReference>
<dbReference type="InterPro" id="IPR004404">
    <property type="entry name" value="DihydroxyA_deHydtase"/>
</dbReference>
<dbReference type="InterPro" id="IPR020558">
    <property type="entry name" value="DiOHA_6PGluconate_deHydtase_CS"/>
</dbReference>
<dbReference type="InterPro" id="IPR056740">
    <property type="entry name" value="ILV_EDD_C"/>
</dbReference>
<dbReference type="InterPro" id="IPR000581">
    <property type="entry name" value="ILV_EDD_N"/>
</dbReference>
<dbReference type="InterPro" id="IPR037237">
    <property type="entry name" value="IlvD/EDD_N"/>
</dbReference>
<dbReference type="NCBIfam" id="TIGR00110">
    <property type="entry name" value="ilvD"/>
    <property type="match status" value="1"/>
</dbReference>
<dbReference type="NCBIfam" id="NF009103">
    <property type="entry name" value="PRK12448.1"/>
    <property type="match status" value="1"/>
</dbReference>
<dbReference type="PANTHER" id="PTHR43661">
    <property type="entry name" value="D-XYLONATE DEHYDRATASE"/>
    <property type="match status" value="1"/>
</dbReference>
<dbReference type="PANTHER" id="PTHR43661:SF3">
    <property type="entry name" value="D-XYLONATE DEHYDRATASE YAGF-RELATED"/>
    <property type="match status" value="1"/>
</dbReference>
<dbReference type="Pfam" id="PF24877">
    <property type="entry name" value="ILV_EDD_C"/>
    <property type="match status" value="1"/>
</dbReference>
<dbReference type="Pfam" id="PF00920">
    <property type="entry name" value="ILVD_EDD_N"/>
    <property type="match status" value="1"/>
</dbReference>
<dbReference type="SUPFAM" id="SSF143975">
    <property type="entry name" value="IlvD/EDD N-terminal domain-like"/>
    <property type="match status" value="1"/>
</dbReference>
<dbReference type="SUPFAM" id="SSF52016">
    <property type="entry name" value="LeuD/IlvD-like"/>
    <property type="match status" value="1"/>
</dbReference>
<dbReference type="PROSITE" id="PS00886">
    <property type="entry name" value="ILVD_EDD_1"/>
    <property type="match status" value="1"/>
</dbReference>
<dbReference type="PROSITE" id="PS00887">
    <property type="entry name" value="ILVD_EDD_2"/>
    <property type="match status" value="1"/>
</dbReference>